<reference key="1">
    <citation type="submission" date="2006-05" db="EMBL/GenBank/DDBJ databases">
        <authorList>
            <consortium name="Genoscope"/>
        </authorList>
    </citation>
    <scope>NUCLEOTIDE SEQUENCE [LARGE SCALE GENOMIC DNA]</scope>
    <source>
        <strain>WH7803</strain>
    </source>
</reference>
<organism>
    <name type="scientific">Synechococcus sp. (strain WH7803)</name>
    <dbReference type="NCBI Taxonomy" id="32051"/>
    <lineage>
        <taxon>Bacteria</taxon>
        <taxon>Bacillati</taxon>
        <taxon>Cyanobacteriota</taxon>
        <taxon>Cyanophyceae</taxon>
        <taxon>Synechococcales</taxon>
        <taxon>Synechococcaceae</taxon>
        <taxon>Synechococcus</taxon>
    </lineage>
</organism>
<keyword id="KW-1185">Reference proteome</keyword>
<keyword id="KW-0687">Ribonucleoprotein</keyword>
<keyword id="KW-0689">Ribosomal protein</keyword>
<sequence>MARPNASELRQLSDADITEQINGLRRELFDLRFQQATRQLGNTHRFKQSRIKLAQLLTVQKERQSSTAS</sequence>
<proteinExistence type="inferred from homology"/>
<accession>A5GIT7</accession>
<gene>
    <name evidence="1" type="primary">rpmC</name>
    <name evidence="1" type="synonym">rpl29</name>
    <name type="ordered locus">SynWH7803_0426</name>
</gene>
<dbReference type="EMBL" id="CT971583">
    <property type="protein sequence ID" value="CAK22852.1"/>
    <property type="molecule type" value="Genomic_DNA"/>
</dbReference>
<dbReference type="SMR" id="A5GIT7"/>
<dbReference type="STRING" id="32051.SynWH7803_0426"/>
<dbReference type="KEGG" id="syx:SynWH7803_0426"/>
<dbReference type="eggNOG" id="COG0255">
    <property type="taxonomic scope" value="Bacteria"/>
</dbReference>
<dbReference type="HOGENOM" id="CLU_158491_0_1_3"/>
<dbReference type="OrthoDB" id="9815192at2"/>
<dbReference type="Proteomes" id="UP000001566">
    <property type="component" value="Chromosome"/>
</dbReference>
<dbReference type="GO" id="GO:0022625">
    <property type="term" value="C:cytosolic large ribosomal subunit"/>
    <property type="evidence" value="ECO:0007669"/>
    <property type="project" value="TreeGrafter"/>
</dbReference>
<dbReference type="GO" id="GO:0003735">
    <property type="term" value="F:structural constituent of ribosome"/>
    <property type="evidence" value="ECO:0007669"/>
    <property type="project" value="InterPro"/>
</dbReference>
<dbReference type="GO" id="GO:0006412">
    <property type="term" value="P:translation"/>
    <property type="evidence" value="ECO:0007669"/>
    <property type="project" value="UniProtKB-UniRule"/>
</dbReference>
<dbReference type="CDD" id="cd00427">
    <property type="entry name" value="Ribosomal_L29_HIP"/>
    <property type="match status" value="1"/>
</dbReference>
<dbReference type="FunFam" id="1.10.287.310:FF:000001">
    <property type="entry name" value="50S ribosomal protein L29"/>
    <property type="match status" value="1"/>
</dbReference>
<dbReference type="Gene3D" id="1.10.287.310">
    <property type="match status" value="1"/>
</dbReference>
<dbReference type="HAMAP" id="MF_00374">
    <property type="entry name" value="Ribosomal_uL29"/>
    <property type="match status" value="1"/>
</dbReference>
<dbReference type="InterPro" id="IPR050063">
    <property type="entry name" value="Ribosomal_protein_uL29"/>
</dbReference>
<dbReference type="InterPro" id="IPR001854">
    <property type="entry name" value="Ribosomal_uL29"/>
</dbReference>
<dbReference type="InterPro" id="IPR036049">
    <property type="entry name" value="Ribosomal_uL29_sf"/>
</dbReference>
<dbReference type="NCBIfam" id="TIGR00012">
    <property type="entry name" value="L29"/>
    <property type="match status" value="1"/>
</dbReference>
<dbReference type="PANTHER" id="PTHR10916">
    <property type="entry name" value="60S RIBOSOMAL PROTEIN L35/50S RIBOSOMAL PROTEIN L29"/>
    <property type="match status" value="1"/>
</dbReference>
<dbReference type="PANTHER" id="PTHR10916:SF0">
    <property type="entry name" value="LARGE RIBOSOMAL SUBUNIT PROTEIN UL29C"/>
    <property type="match status" value="1"/>
</dbReference>
<dbReference type="Pfam" id="PF00831">
    <property type="entry name" value="Ribosomal_L29"/>
    <property type="match status" value="1"/>
</dbReference>
<dbReference type="SUPFAM" id="SSF46561">
    <property type="entry name" value="Ribosomal protein L29 (L29p)"/>
    <property type="match status" value="1"/>
</dbReference>
<comment type="similarity">
    <text evidence="1">Belongs to the universal ribosomal protein uL29 family.</text>
</comment>
<protein>
    <recommendedName>
        <fullName evidence="1">Large ribosomal subunit protein uL29</fullName>
    </recommendedName>
    <alternativeName>
        <fullName evidence="2">50S ribosomal protein L29</fullName>
    </alternativeName>
</protein>
<feature type="chain" id="PRO_1000007639" description="Large ribosomal subunit protein uL29">
    <location>
        <begin position="1"/>
        <end position="69"/>
    </location>
</feature>
<evidence type="ECO:0000255" key="1">
    <source>
        <dbReference type="HAMAP-Rule" id="MF_00374"/>
    </source>
</evidence>
<evidence type="ECO:0000305" key="2"/>
<name>RL29_SYNPW</name>